<sequence>MRGSSNRKIDPRIHYLVPKHEVLSIDEAYKILKELGIRPEQLPWIRASDPVARSINAKPGDIIRIIRKSQLYGEVVSYRYVISG</sequence>
<dbReference type="EC" id="2.7.7.6" evidence="1"/>
<dbReference type="EMBL" id="CP001404">
    <property type="protein sequence ID" value="ACP48043.1"/>
    <property type="molecule type" value="Genomic_DNA"/>
</dbReference>
<dbReference type="RefSeq" id="WP_012711883.1">
    <property type="nucleotide sequence ID" value="NC_012623.1"/>
</dbReference>
<dbReference type="SMR" id="C3NFS5"/>
<dbReference type="KEGG" id="sin:YN1551_0934"/>
<dbReference type="HOGENOM" id="CLU_058320_4_0_2"/>
<dbReference type="Proteomes" id="UP000006818">
    <property type="component" value="Chromosome"/>
</dbReference>
<dbReference type="GO" id="GO:0005737">
    <property type="term" value="C:cytoplasm"/>
    <property type="evidence" value="ECO:0007669"/>
    <property type="project" value="UniProtKB-SubCell"/>
</dbReference>
<dbReference type="GO" id="GO:0000428">
    <property type="term" value="C:DNA-directed RNA polymerase complex"/>
    <property type="evidence" value="ECO:0007669"/>
    <property type="project" value="UniProtKB-KW"/>
</dbReference>
<dbReference type="GO" id="GO:0003677">
    <property type="term" value="F:DNA binding"/>
    <property type="evidence" value="ECO:0007669"/>
    <property type="project" value="InterPro"/>
</dbReference>
<dbReference type="GO" id="GO:0003899">
    <property type="term" value="F:DNA-directed RNA polymerase activity"/>
    <property type="evidence" value="ECO:0007669"/>
    <property type="project" value="UniProtKB-UniRule"/>
</dbReference>
<dbReference type="GO" id="GO:0006366">
    <property type="term" value="P:transcription by RNA polymerase II"/>
    <property type="evidence" value="ECO:0007669"/>
    <property type="project" value="TreeGrafter"/>
</dbReference>
<dbReference type="GO" id="GO:0006362">
    <property type="term" value="P:transcription elongation by RNA polymerase I"/>
    <property type="evidence" value="ECO:0007669"/>
    <property type="project" value="TreeGrafter"/>
</dbReference>
<dbReference type="GO" id="GO:0042797">
    <property type="term" value="P:tRNA transcription by RNA polymerase III"/>
    <property type="evidence" value="ECO:0007669"/>
    <property type="project" value="TreeGrafter"/>
</dbReference>
<dbReference type="Gene3D" id="3.90.940.20">
    <property type="entry name" value="RPB5-like RNA polymerase subunit"/>
    <property type="match status" value="1"/>
</dbReference>
<dbReference type="HAMAP" id="MF_00025">
    <property type="entry name" value="RNApol_Rpo5_RPB5"/>
    <property type="match status" value="1"/>
</dbReference>
<dbReference type="InterPro" id="IPR014381">
    <property type="entry name" value="Arch_Rpo5/euc_Rpb5"/>
</dbReference>
<dbReference type="InterPro" id="IPR000783">
    <property type="entry name" value="RNA_pol_subH/Rpb5_C"/>
</dbReference>
<dbReference type="InterPro" id="IPR020608">
    <property type="entry name" value="RNA_pol_subH/Rpb5_CS"/>
</dbReference>
<dbReference type="InterPro" id="IPR035913">
    <property type="entry name" value="RPB5-like_sf"/>
</dbReference>
<dbReference type="NCBIfam" id="NF007129">
    <property type="entry name" value="PRK09570.1"/>
    <property type="match status" value="1"/>
</dbReference>
<dbReference type="PANTHER" id="PTHR10535">
    <property type="entry name" value="DNA-DIRECTED RNA POLYMERASES I, II, AND III SUBUNIT RPABC1"/>
    <property type="match status" value="1"/>
</dbReference>
<dbReference type="PANTHER" id="PTHR10535:SF0">
    <property type="entry name" value="DNA-DIRECTED RNA POLYMERASES I, II, AND III SUBUNIT RPABC1"/>
    <property type="match status" value="1"/>
</dbReference>
<dbReference type="Pfam" id="PF01191">
    <property type="entry name" value="RNA_pol_Rpb5_C"/>
    <property type="match status" value="1"/>
</dbReference>
<dbReference type="SUPFAM" id="SSF55287">
    <property type="entry name" value="RPB5-like RNA polymerase subunit"/>
    <property type="match status" value="1"/>
</dbReference>
<dbReference type="PROSITE" id="PS01110">
    <property type="entry name" value="RNA_POL_H_23KD"/>
    <property type="match status" value="1"/>
</dbReference>
<evidence type="ECO:0000255" key="1">
    <source>
        <dbReference type="HAMAP-Rule" id="MF_00025"/>
    </source>
</evidence>
<protein>
    <recommendedName>
        <fullName evidence="1">DNA-directed RNA polymerase subunit Rpo5</fullName>
        <ecNumber evidence="1">2.7.7.6</ecNumber>
    </recommendedName>
    <alternativeName>
        <fullName evidence="1">DNA-directed RNA polymerase subunit H</fullName>
    </alternativeName>
</protein>
<keyword id="KW-0963">Cytoplasm</keyword>
<keyword id="KW-0240">DNA-directed RNA polymerase</keyword>
<keyword id="KW-0548">Nucleotidyltransferase</keyword>
<keyword id="KW-0804">Transcription</keyword>
<keyword id="KW-0808">Transferase</keyword>
<gene>
    <name evidence="1" type="primary">rpo5</name>
    <name evidence="1" type="synonym">rpoH</name>
    <name type="ordered locus">YN1551_0934</name>
</gene>
<proteinExistence type="inferred from homology"/>
<accession>C3NFS5</accession>
<name>RPO5_SACI1</name>
<organism>
    <name type="scientific">Saccharolobus islandicus (strain Y.N.15.51 / Yellowstone #2)</name>
    <name type="common">Sulfolobus islandicus</name>
    <dbReference type="NCBI Taxonomy" id="419942"/>
    <lineage>
        <taxon>Archaea</taxon>
        <taxon>Thermoproteota</taxon>
        <taxon>Thermoprotei</taxon>
        <taxon>Sulfolobales</taxon>
        <taxon>Sulfolobaceae</taxon>
        <taxon>Saccharolobus</taxon>
    </lineage>
</organism>
<feature type="chain" id="PRO_1000201953" description="DNA-directed RNA polymerase subunit Rpo5">
    <location>
        <begin position="1"/>
        <end position="84"/>
    </location>
</feature>
<reference key="1">
    <citation type="journal article" date="2009" name="Proc. Natl. Acad. Sci. U.S.A.">
        <title>Biogeography of the Sulfolobus islandicus pan-genome.</title>
        <authorList>
            <person name="Reno M.L."/>
            <person name="Held N.L."/>
            <person name="Fields C.J."/>
            <person name="Burke P.V."/>
            <person name="Whitaker R.J."/>
        </authorList>
    </citation>
    <scope>NUCLEOTIDE SEQUENCE [LARGE SCALE GENOMIC DNA]</scope>
    <source>
        <strain>Y.N.15.51 / Yellowstone #2</strain>
    </source>
</reference>
<comment type="function">
    <text evidence="1">DNA-dependent RNA polymerase (RNAP) catalyzes the transcription of DNA into RNA using the four ribonucleoside triphosphates as substrates.</text>
</comment>
<comment type="catalytic activity">
    <reaction evidence="1">
        <text>RNA(n) + a ribonucleoside 5'-triphosphate = RNA(n+1) + diphosphate</text>
        <dbReference type="Rhea" id="RHEA:21248"/>
        <dbReference type="Rhea" id="RHEA-COMP:14527"/>
        <dbReference type="Rhea" id="RHEA-COMP:17342"/>
        <dbReference type="ChEBI" id="CHEBI:33019"/>
        <dbReference type="ChEBI" id="CHEBI:61557"/>
        <dbReference type="ChEBI" id="CHEBI:140395"/>
        <dbReference type="EC" id="2.7.7.6"/>
    </reaction>
</comment>
<comment type="subunit">
    <text evidence="1">Part of the RNA polymerase complex.</text>
</comment>
<comment type="subcellular location">
    <subcellularLocation>
        <location evidence="1">Cytoplasm</location>
    </subcellularLocation>
</comment>
<comment type="similarity">
    <text evidence="1">Belongs to the archaeal Rpo5/eukaryotic RPB5 RNA polymerase subunit family.</text>
</comment>